<organism>
    <name type="scientific">Staphylococcus aureus (strain NCTC 8325 / PS 47)</name>
    <dbReference type="NCBI Taxonomy" id="93061"/>
    <lineage>
        <taxon>Bacteria</taxon>
        <taxon>Bacillati</taxon>
        <taxon>Bacillota</taxon>
        <taxon>Bacilli</taxon>
        <taxon>Bacillales</taxon>
        <taxon>Staphylococcaceae</taxon>
        <taxon>Staphylococcus</taxon>
    </lineage>
</organism>
<feature type="chain" id="PRO_0000378262" description="Putative cysteine ligase BshC">
    <location>
        <begin position="1"/>
        <end position="540"/>
    </location>
</feature>
<feature type="coiled-coil region" evidence="1">
    <location>
        <begin position="425"/>
        <end position="453"/>
    </location>
</feature>
<name>BSHC_STAA8</name>
<comment type="function">
    <text evidence="1">Involved in bacillithiol (BSH) biosynthesis. May catalyze the last step of the pathway, the addition of cysteine to glucosamine malate (GlcN-Mal) to generate BSH.</text>
</comment>
<comment type="similarity">
    <text evidence="1">Belongs to the BshC family.</text>
</comment>
<comment type="sequence caution" evidence="2">
    <conflict type="frameshift">
        <sequence resource="EMBL-CDS" id="ABD30249"/>
    </conflict>
</comment>
<comment type="sequence caution" evidence="2">
    <conflict type="miscellaneous discrepancy">
        <sequence resource="EMBL-CDS" id="ABD30250"/>
    </conflict>
    <text>Wrong choice of frame.</text>
</comment>
<comment type="sequence caution" evidence="2">
    <conflict type="frameshift">
        <sequence resource="EMBL-CDS" id="ABD30251"/>
    </conflict>
</comment>
<evidence type="ECO:0000255" key="1">
    <source>
        <dbReference type="HAMAP-Rule" id="MF_01867"/>
    </source>
</evidence>
<evidence type="ECO:0000305" key="2"/>
<reference key="1">
    <citation type="book" date="2006" name="Gram positive pathogens, 2nd edition">
        <title>The Staphylococcus aureus NCTC 8325 genome.</title>
        <editorList>
            <person name="Fischetti V."/>
            <person name="Novick R."/>
            <person name="Ferretti J."/>
            <person name="Portnoy D."/>
            <person name="Rood J."/>
        </editorList>
        <authorList>
            <person name="Gillaspy A.F."/>
            <person name="Worrell V."/>
            <person name="Orvis J."/>
            <person name="Roe B.A."/>
            <person name="Dyer D.W."/>
            <person name="Iandolo J.J."/>
        </authorList>
    </citation>
    <scope>NUCLEOTIDE SEQUENCE [LARGE SCALE GENOMIC DNA]</scope>
    <source>
        <strain>NCTC 8325 / PS 47</strain>
    </source>
</reference>
<protein>
    <recommendedName>
        <fullName evidence="1">Putative cysteine ligase BshC</fullName>
        <ecNumber evidence="1">6.-.-.-</ecNumber>
    </recommendedName>
</protein>
<dbReference type="EC" id="6.-.-.-" evidence="1"/>
<dbReference type="EMBL" id="CP000253">
    <property type="protein sequence ID" value="ABD30249.1"/>
    <property type="status" value="ALT_FRAME"/>
    <property type="molecule type" value="Genomic_DNA"/>
</dbReference>
<dbReference type="EMBL" id="CP000253">
    <property type="protein sequence ID" value="ABD30250.1"/>
    <property type="status" value="ALT_SEQ"/>
    <property type="molecule type" value="Genomic_DNA"/>
</dbReference>
<dbReference type="EMBL" id="CP000253">
    <property type="protein sequence ID" value="ABD30251.1"/>
    <property type="status" value="ALT_FRAME"/>
    <property type="molecule type" value="Genomic_DNA"/>
</dbReference>
<dbReference type="RefSeq" id="WP_001804482.1">
    <property type="nucleotide sequence ID" value="NC_007795.1"/>
</dbReference>
<dbReference type="RefSeq" id="WP_011447006.1">
    <property type="nucleotide sequence ID" value="NC_007795.1"/>
</dbReference>
<dbReference type="RefSeq" id="YP_499681.1">
    <property type="nucleotide sequence ID" value="NC_007795.1"/>
</dbReference>
<dbReference type="RefSeq" id="YP_499683.1">
    <property type="nucleotide sequence ID" value="NC_007795.1"/>
</dbReference>
<dbReference type="SMR" id="Q2FZ98"/>
<dbReference type="STRING" id="93061.SAOUHSC_01141"/>
<dbReference type="PaxDb" id="1280-SAXN108_1175"/>
<dbReference type="KEGG" id="sao:SAOUHSC_01139"/>
<dbReference type="KEGG" id="sao:SAOUHSC_01141"/>
<dbReference type="PATRIC" id="fig|93061.5.peg.1045"/>
<dbReference type="eggNOG" id="COG4365">
    <property type="taxonomic scope" value="Bacteria"/>
</dbReference>
<dbReference type="HOGENOM" id="CLU_2669235_0_0_9"/>
<dbReference type="OrthoDB" id="9765151at2"/>
<dbReference type="Proteomes" id="UP000008816">
    <property type="component" value="Chromosome"/>
</dbReference>
<dbReference type="GO" id="GO:0016874">
    <property type="term" value="F:ligase activity"/>
    <property type="evidence" value="ECO:0007669"/>
    <property type="project" value="UniProtKB-UniRule"/>
</dbReference>
<dbReference type="HAMAP" id="MF_01867">
    <property type="entry name" value="BshC"/>
    <property type="match status" value="1"/>
</dbReference>
<dbReference type="InterPro" id="IPR011199">
    <property type="entry name" value="Bacillithiol_biosynth_BshC"/>
</dbReference>
<dbReference type="InterPro" id="IPR055399">
    <property type="entry name" value="CC_BshC"/>
</dbReference>
<dbReference type="InterPro" id="IPR055398">
    <property type="entry name" value="Rossmann-like_BshC"/>
</dbReference>
<dbReference type="NCBIfam" id="TIGR03998">
    <property type="entry name" value="thiol_BshC"/>
    <property type="match status" value="1"/>
</dbReference>
<dbReference type="Pfam" id="PF24850">
    <property type="entry name" value="CC_BshC"/>
    <property type="match status" value="1"/>
</dbReference>
<dbReference type="Pfam" id="PF10079">
    <property type="entry name" value="Rossmann-like_BshC"/>
    <property type="match status" value="1"/>
</dbReference>
<dbReference type="PIRSF" id="PIRSF012535">
    <property type="entry name" value="UCP012535"/>
    <property type="match status" value="1"/>
</dbReference>
<accession>Q2FZ98</accession>
<accession>Q2FZ99</accession>
<accession>Q2FZA0</accession>
<keyword id="KW-0175">Coiled coil</keyword>
<keyword id="KW-0436">Ligase</keyword>
<keyword id="KW-1185">Reference proteome</keyword>
<gene>
    <name evidence="1" type="primary">bshC</name>
    <name type="ordered locus">SAOUHSC_01139/SAOUHSC_01140/SAOUHSC_01141</name>
</gene>
<sequence>MDCKVVSLNEKDQFIPKIKSSDPVITGLFQYDAAQQTSFEKRMSKENNGREAALANVIREYMSDLKLSKLSSEQELNIQHLANGSKVVIGGQQAGLFGGPLYTFHKIFSIITLSKELTDTHKQQVVPVFWIAGEDHDFDEVNHTFVYNENHGSLHKVKYHTMEMPETTVSRYYPDKAELKQTLKTMFIHMKETVHTQGLLEICDRIIDQYDSWTDMFKALLHETFKAYGVLFIDAQFEPLRKMEAPMFKKILKKHQLLDDAFRATQQRTQNQGLNAMIQTDTNVHLFLHDENMRQLVSYDGKHFKLNKTDKTYIKEEIINIAENQPELFSNNVVTRPLMEEWLFNTVAFVGGPSEIKYWAELKDVFELFDVEMPIVMPRLRITYLNDRIEKLLSKYNIPLEKVLVDGVEGERSKFIREQASHQFIEKVEGMIEQQRRLNKDLLDEVAGNQNNINLVNKNNEIHIQQYDYLLKRYLLNIERENDISMKQFREIQETLHPMGGLQERIWNPLQILNDFGTDVFKPSTYPPLSYTFDHIIIKP</sequence>
<proteinExistence type="inferred from homology"/>